<keyword id="KW-0131">Cell cycle</keyword>
<keyword id="KW-0132">Cell division</keyword>
<keyword id="KW-1003">Cell membrane</keyword>
<keyword id="KW-0133">Cell shape</keyword>
<keyword id="KW-0961">Cell wall biogenesis/degradation</keyword>
<keyword id="KW-0460">Magnesium</keyword>
<keyword id="KW-0472">Membrane</keyword>
<keyword id="KW-0479">Metal-binding</keyword>
<keyword id="KW-0573">Peptidoglycan synthesis</keyword>
<keyword id="KW-1185">Reference proteome</keyword>
<keyword id="KW-0808">Transferase</keyword>
<keyword id="KW-0812">Transmembrane</keyword>
<keyword id="KW-1133">Transmembrane helix</keyword>
<name>MRAY_ALKOO</name>
<evidence type="ECO:0000255" key="1">
    <source>
        <dbReference type="HAMAP-Rule" id="MF_00038"/>
    </source>
</evidence>
<protein>
    <recommendedName>
        <fullName evidence="1">Phospho-N-acetylmuramoyl-pentapeptide-transferase</fullName>
        <ecNumber evidence="1">2.7.8.13</ecNumber>
    </recommendedName>
    <alternativeName>
        <fullName evidence="1">UDP-MurNAc-pentapeptide phosphotransferase</fullName>
    </alternativeName>
</protein>
<comment type="function">
    <text evidence="1">Catalyzes the initial step of the lipid cycle reactions in the biosynthesis of the cell wall peptidoglycan: transfers peptidoglycan precursor phospho-MurNAc-pentapeptide from UDP-MurNAc-pentapeptide onto the lipid carrier undecaprenyl phosphate, yielding undecaprenyl-pyrophosphoryl-MurNAc-pentapeptide, known as lipid I.</text>
</comment>
<comment type="catalytic activity">
    <reaction evidence="1">
        <text>UDP-N-acetyl-alpha-D-muramoyl-L-alanyl-gamma-D-glutamyl-meso-2,6-diaminopimeloyl-D-alanyl-D-alanine + di-trans,octa-cis-undecaprenyl phosphate = di-trans,octa-cis-undecaprenyl diphospho-N-acetyl-alpha-D-muramoyl-L-alanyl-D-glutamyl-meso-2,6-diaminopimeloyl-D-alanyl-D-alanine + UMP</text>
        <dbReference type="Rhea" id="RHEA:28386"/>
        <dbReference type="ChEBI" id="CHEBI:57865"/>
        <dbReference type="ChEBI" id="CHEBI:60392"/>
        <dbReference type="ChEBI" id="CHEBI:61386"/>
        <dbReference type="ChEBI" id="CHEBI:61387"/>
        <dbReference type="EC" id="2.7.8.13"/>
    </reaction>
</comment>
<comment type="cofactor">
    <cofactor evidence="1">
        <name>Mg(2+)</name>
        <dbReference type="ChEBI" id="CHEBI:18420"/>
    </cofactor>
</comment>
<comment type="pathway">
    <text evidence="1">Cell wall biogenesis; peptidoglycan biosynthesis.</text>
</comment>
<comment type="subcellular location">
    <subcellularLocation>
        <location evidence="1">Cell membrane</location>
        <topology evidence="1">Multi-pass membrane protein</topology>
    </subcellularLocation>
</comment>
<comment type="similarity">
    <text evidence="1">Belongs to the glycosyltransferase 4 family. MraY subfamily.</text>
</comment>
<proteinExistence type="inferred from homology"/>
<sequence length="332" mass="35762">MILEHKQMIYTIIIGFFITLILGPLIIPFLKKLKVGQTVREEGPRSHLQKTGTPTIGGLIIIASVLVTSFTAGLINQDLWVAIGAMVAFGLIGFIDDFIKVVLKRSLGLRAYQKMSLQIIVAVFLAIYQSNISVMGTKIIVPFVKGSLTLGSFTIPQYLDLGILYIPFIVFVVVATVNSVNLTDGLDGLASGVTLIVAAFFSILAMEWGYPSLAIFAAAVTGSCLGFLRFNSHPAQVFMGDTGSLALGGAISAVAILMNVALIVPIVGGIYFAEALSVILQVISFKLTGKRIFKMSPLHHHYELSGWAETKVVIVFWIVTVILCLIGMLGLN</sequence>
<feature type="chain" id="PRO_0000332525" description="Phospho-N-acetylmuramoyl-pentapeptide-transferase">
    <location>
        <begin position="1"/>
        <end position="332"/>
    </location>
</feature>
<feature type="transmembrane region" description="Helical" evidence="1">
    <location>
        <begin position="9"/>
        <end position="29"/>
    </location>
</feature>
<feature type="transmembrane region" description="Helical" evidence="1">
    <location>
        <begin position="55"/>
        <end position="75"/>
    </location>
</feature>
<feature type="transmembrane region" description="Helical" evidence="1">
    <location>
        <begin position="79"/>
        <end position="99"/>
    </location>
</feature>
<feature type="transmembrane region" description="Helical" evidence="1">
    <location>
        <begin position="115"/>
        <end position="135"/>
    </location>
</feature>
<feature type="transmembrane region" description="Helical" evidence="1">
    <location>
        <begin position="155"/>
        <end position="175"/>
    </location>
</feature>
<feature type="transmembrane region" description="Helical" evidence="1">
    <location>
        <begin position="196"/>
        <end position="216"/>
    </location>
</feature>
<feature type="transmembrane region" description="Helical" evidence="1">
    <location>
        <begin position="253"/>
        <end position="273"/>
    </location>
</feature>
<feature type="transmembrane region" description="Helical" evidence="1">
    <location>
        <begin position="312"/>
        <end position="332"/>
    </location>
</feature>
<dbReference type="EC" id="2.7.8.13" evidence="1"/>
<dbReference type="EMBL" id="CP000853">
    <property type="protein sequence ID" value="ABW18920.1"/>
    <property type="molecule type" value="Genomic_DNA"/>
</dbReference>
<dbReference type="RefSeq" id="WP_012159232.1">
    <property type="nucleotide sequence ID" value="NC_009922.1"/>
</dbReference>
<dbReference type="SMR" id="A8MH33"/>
<dbReference type="STRING" id="350688.Clos_1376"/>
<dbReference type="KEGG" id="aoe:Clos_1376"/>
<dbReference type="eggNOG" id="COG0472">
    <property type="taxonomic scope" value="Bacteria"/>
</dbReference>
<dbReference type="HOGENOM" id="CLU_023982_0_1_9"/>
<dbReference type="OrthoDB" id="9805475at2"/>
<dbReference type="UniPathway" id="UPA00219"/>
<dbReference type="Proteomes" id="UP000000269">
    <property type="component" value="Chromosome"/>
</dbReference>
<dbReference type="GO" id="GO:0005886">
    <property type="term" value="C:plasma membrane"/>
    <property type="evidence" value="ECO:0007669"/>
    <property type="project" value="UniProtKB-SubCell"/>
</dbReference>
<dbReference type="GO" id="GO:0046872">
    <property type="term" value="F:metal ion binding"/>
    <property type="evidence" value="ECO:0007669"/>
    <property type="project" value="UniProtKB-KW"/>
</dbReference>
<dbReference type="GO" id="GO:0008963">
    <property type="term" value="F:phospho-N-acetylmuramoyl-pentapeptide-transferase activity"/>
    <property type="evidence" value="ECO:0007669"/>
    <property type="project" value="UniProtKB-UniRule"/>
</dbReference>
<dbReference type="GO" id="GO:0051992">
    <property type="term" value="F:UDP-N-acetylmuramoyl-L-alanyl-D-glutamyl-meso-2,6-diaminopimelyl-D-alanyl-D-alanine:undecaprenyl-phosphate transferase activity"/>
    <property type="evidence" value="ECO:0007669"/>
    <property type="project" value="RHEA"/>
</dbReference>
<dbReference type="GO" id="GO:0051301">
    <property type="term" value="P:cell division"/>
    <property type="evidence" value="ECO:0007669"/>
    <property type="project" value="UniProtKB-KW"/>
</dbReference>
<dbReference type="GO" id="GO:0071555">
    <property type="term" value="P:cell wall organization"/>
    <property type="evidence" value="ECO:0007669"/>
    <property type="project" value="UniProtKB-KW"/>
</dbReference>
<dbReference type="GO" id="GO:0009252">
    <property type="term" value="P:peptidoglycan biosynthetic process"/>
    <property type="evidence" value="ECO:0007669"/>
    <property type="project" value="UniProtKB-UniRule"/>
</dbReference>
<dbReference type="GO" id="GO:0008360">
    <property type="term" value="P:regulation of cell shape"/>
    <property type="evidence" value="ECO:0007669"/>
    <property type="project" value="UniProtKB-KW"/>
</dbReference>
<dbReference type="CDD" id="cd06852">
    <property type="entry name" value="GT_MraY"/>
    <property type="match status" value="1"/>
</dbReference>
<dbReference type="HAMAP" id="MF_00038">
    <property type="entry name" value="MraY"/>
    <property type="match status" value="1"/>
</dbReference>
<dbReference type="InterPro" id="IPR000715">
    <property type="entry name" value="Glycosyl_transferase_4"/>
</dbReference>
<dbReference type="InterPro" id="IPR003524">
    <property type="entry name" value="PNAcMuramoyl-5peptid_Trfase"/>
</dbReference>
<dbReference type="InterPro" id="IPR018480">
    <property type="entry name" value="PNAcMuramoyl-5peptid_Trfase_CS"/>
</dbReference>
<dbReference type="NCBIfam" id="TIGR00445">
    <property type="entry name" value="mraY"/>
    <property type="match status" value="1"/>
</dbReference>
<dbReference type="PANTHER" id="PTHR22926">
    <property type="entry name" value="PHOSPHO-N-ACETYLMURAMOYL-PENTAPEPTIDE-TRANSFERASE"/>
    <property type="match status" value="1"/>
</dbReference>
<dbReference type="PANTHER" id="PTHR22926:SF5">
    <property type="entry name" value="PHOSPHO-N-ACETYLMURAMOYL-PENTAPEPTIDE-TRANSFERASE HOMOLOG"/>
    <property type="match status" value="1"/>
</dbReference>
<dbReference type="Pfam" id="PF00953">
    <property type="entry name" value="Glycos_transf_4"/>
    <property type="match status" value="1"/>
</dbReference>
<dbReference type="PROSITE" id="PS01348">
    <property type="entry name" value="MRAY_2"/>
    <property type="match status" value="1"/>
</dbReference>
<gene>
    <name evidence="1" type="primary">mraY</name>
    <name type="ordered locus">Clos_1376</name>
</gene>
<organism>
    <name type="scientific">Alkaliphilus oremlandii (strain OhILAs)</name>
    <name type="common">Clostridium oremlandii (strain OhILAs)</name>
    <dbReference type="NCBI Taxonomy" id="350688"/>
    <lineage>
        <taxon>Bacteria</taxon>
        <taxon>Bacillati</taxon>
        <taxon>Bacillota</taxon>
        <taxon>Clostridia</taxon>
        <taxon>Peptostreptococcales</taxon>
        <taxon>Natronincolaceae</taxon>
        <taxon>Alkaliphilus</taxon>
    </lineage>
</organism>
<accession>A8MH33</accession>
<reference key="1">
    <citation type="submission" date="2007-10" db="EMBL/GenBank/DDBJ databases">
        <title>Complete genome of Alkaliphilus oremlandii OhILAs.</title>
        <authorList>
            <person name="Copeland A."/>
            <person name="Lucas S."/>
            <person name="Lapidus A."/>
            <person name="Barry K."/>
            <person name="Detter J.C."/>
            <person name="Glavina del Rio T."/>
            <person name="Hammon N."/>
            <person name="Israni S."/>
            <person name="Dalin E."/>
            <person name="Tice H."/>
            <person name="Pitluck S."/>
            <person name="Chain P."/>
            <person name="Malfatti S."/>
            <person name="Shin M."/>
            <person name="Vergez L."/>
            <person name="Schmutz J."/>
            <person name="Larimer F."/>
            <person name="Land M."/>
            <person name="Hauser L."/>
            <person name="Kyrpides N."/>
            <person name="Mikhailova N."/>
            <person name="Stolz J.F."/>
            <person name="Dawson A."/>
            <person name="Fisher E."/>
            <person name="Crable B."/>
            <person name="Perera E."/>
            <person name="Lisak J."/>
            <person name="Ranganathan M."/>
            <person name="Basu P."/>
            <person name="Richardson P."/>
        </authorList>
    </citation>
    <scope>NUCLEOTIDE SEQUENCE [LARGE SCALE GENOMIC DNA]</scope>
    <source>
        <strain>OhILAs</strain>
    </source>
</reference>